<reference key="1">
    <citation type="book" date="2006" name="Gram positive pathogens, 2nd edition">
        <title>The Staphylococcus aureus NCTC 8325 genome.</title>
        <editorList>
            <person name="Fischetti V."/>
            <person name="Novick R."/>
            <person name="Ferretti J."/>
            <person name="Portnoy D."/>
            <person name="Rood J."/>
        </editorList>
        <authorList>
            <person name="Gillaspy A.F."/>
            <person name="Worrell V."/>
            <person name="Orvis J."/>
            <person name="Roe B.A."/>
            <person name="Dyer D.W."/>
            <person name="Iandolo J.J."/>
        </authorList>
    </citation>
    <scope>NUCLEOTIDE SEQUENCE [LARGE SCALE GENOMIC DNA]</scope>
    <source>
        <strain>NCTC 8325 / PS 47</strain>
    </source>
</reference>
<evidence type="ECO:0000250" key="1"/>
<evidence type="ECO:0000255" key="2"/>
<evidence type="ECO:0000305" key="3"/>
<name>MDEP_STAA8</name>
<sequence length="157" mass="18899">MIVNYLKHKFYNLLTTMIVLFIFVLSGAIFLTFLGFGLYGLSRILIYFRLGDFTYNRSMYDNLLYYGSYIIFGYFIIFAVEHLMDYFRKMLPENAYFRGATFHLISYTVATTLFYFIIHLNYVYINIDFWVIMVIIGFLYVCKLQFYPESKNLNNRK</sequence>
<keyword id="KW-1003">Cell membrane</keyword>
<keyword id="KW-0472">Membrane</keyword>
<keyword id="KW-1185">Reference proteome</keyword>
<keyword id="KW-0812">Transmembrane</keyword>
<keyword id="KW-1133">Transmembrane helix</keyword>
<keyword id="KW-0813">Transport</keyword>
<protein>
    <recommendedName>
        <fullName>Multidrug resistance efflux pump SepA</fullName>
    </recommendedName>
    <alternativeName>
        <fullName>Antiseptic resistance protein SepA</fullName>
    </alternativeName>
    <alternativeName>
        <fullName>Staphylococcal efflux pump A</fullName>
    </alternativeName>
</protein>
<comment type="function">
    <text evidence="1">Involved in multidrug efflux.</text>
</comment>
<comment type="subcellular location">
    <subcellularLocation>
        <location evidence="3">Cell membrane</location>
        <topology evidence="3">Multi-pass membrane protein</topology>
    </subcellularLocation>
</comment>
<comment type="similarity">
    <text evidence="3">Belongs to the multidrug resistance efflux pump SepA family.</text>
</comment>
<feature type="chain" id="PRO_0000351491" description="Multidrug resistance efflux pump SepA">
    <location>
        <begin position="1"/>
        <end position="157"/>
    </location>
</feature>
<feature type="transmembrane region" description="Helical" evidence="2">
    <location>
        <begin position="18"/>
        <end position="38"/>
    </location>
</feature>
<feature type="transmembrane region" description="Helical" evidence="2">
    <location>
        <begin position="63"/>
        <end position="83"/>
    </location>
</feature>
<feature type="transmembrane region" description="Helical" evidence="2">
    <location>
        <begin position="100"/>
        <end position="120"/>
    </location>
</feature>
<feature type="transmembrane region" description="Helical" evidence="2">
    <location>
        <begin position="122"/>
        <end position="142"/>
    </location>
</feature>
<proteinExistence type="inferred from homology"/>
<dbReference type="EMBL" id="CP000253">
    <property type="protein sequence ID" value="ABD31444.1"/>
    <property type="molecule type" value="Genomic_DNA"/>
</dbReference>
<dbReference type="RefSeq" id="WP_000636857.1">
    <property type="nucleotide sequence ID" value="NZ_LS483365.1"/>
</dbReference>
<dbReference type="RefSeq" id="YP_500891.1">
    <property type="nucleotide sequence ID" value="NC_007795.1"/>
</dbReference>
<dbReference type="STRING" id="93061.SAOUHSC_02419"/>
<dbReference type="PaxDb" id="1280-SAXN108_2415"/>
<dbReference type="GeneID" id="3919630"/>
<dbReference type="KEGG" id="sao:SAOUHSC_02419"/>
<dbReference type="PATRIC" id="fig|93061.5.peg.2184"/>
<dbReference type="eggNOG" id="ENOG5033YVE">
    <property type="taxonomic scope" value="Bacteria"/>
</dbReference>
<dbReference type="HOGENOM" id="CLU_151983_0_0_9"/>
<dbReference type="OrthoDB" id="2417783at2"/>
<dbReference type="PRO" id="PR:Q2FW84"/>
<dbReference type="Proteomes" id="UP000008816">
    <property type="component" value="Chromosome"/>
</dbReference>
<dbReference type="GO" id="GO:0005886">
    <property type="term" value="C:plasma membrane"/>
    <property type="evidence" value="ECO:0007669"/>
    <property type="project" value="UniProtKB-SubCell"/>
</dbReference>
<dbReference type="InterPro" id="IPR031396">
    <property type="entry name" value="SepA"/>
</dbReference>
<dbReference type="Pfam" id="PF17080">
    <property type="entry name" value="SepA"/>
    <property type="match status" value="1"/>
</dbReference>
<accession>Q2FW84</accession>
<organism>
    <name type="scientific">Staphylococcus aureus (strain NCTC 8325 / PS 47)</name>
    <dbReference type="NCBI Taxonomy" id="93061"/>
    <lineage>
        <taxon>Bacteria</taxon>
        <taxon>Bacillati</taxon>
        <taxon>Bacillota</taxon>
        <taxon>Bacilli</taxon>
        <taxon>Bacillales</taxon>
        <taxon>Staphylococcaceae</taxon>
        <taxon>Staphylococcus</taxon>
    </lineage>
</organism>
<gene>
    <name type="primary">sepA</name>
    <name type="ordered locus">SAOUHSC_02419</name>
</gene>